<reference key="1">
    <citation type="journal article" date="2013" name="Antimicrob. Agents Chemother.">
        <title>Involvement of MarR and YedS in carbapenem resistance in a clinical isolate of Escherichia coli from China.</title>
        <authorList>
            <person name="Warner D.M."/>
            <person name="Yang Q."/>
            <person name="Duval V."/>
            <person name="Chen M."/>
            <person name="Xu Y."/>
            <person name="Levy S.B."/>
        </authorList>
    </citation>
    <scope>NUCLEOTIDE SEQUENCE [GENOMIC DNA]</scope>
    <scope>FUNCTION</scope>
    <scope>SUBCELLULAR LOCATION</scope>
    <scope>INDUCTION</scope>
    <source>
        <strain>CH4</strain>
    </source>
</reference>
<protein>
    <recommendedName>
        <fullName>Outer membrane protein YedS</fullName>
    </recommendedName>
</protein>
<feature type="signal peptide" evidence="2">
    <location>
        <begin position="1"/>
        <end position="21"/>
    </location>
</feature>
<feature type="chain" id="PRO_5003826863" description="Outer membrane protein YedS" evidence="2">
    <location>
        <begin position="22"/>
        <end position="357"/>
    </location>
</feature>
<dbReference type="EMBL" id="JX392406">
    <property type="protein sequence ID" value="AFR46005.1"/>
    <property type="molecule type" value="Genomic_DNA"/>
</dbReference>
<dbReference type="SMR" id="J9RX10"/>
<dbReference type="eggNOG" id="COG3203">
    <property type="taxonomic scope" value="Bacteria"/>
</dbReference>
<dbReference type="GO" id="GO:0009279">
    <property type="term" value="C:cell outer membrane"/>
    <property type="evidence" value="ECO:0007669"/>
    <property type="project" value="UniProtKB-SubCell"/>
</dbReference>
<dbReference type="GO" id="GO:0046930">
    <property type="term" value="C:pore complex"/>
    <property type="evidence" value="ECO:0007669"/>
    <property type="project" value="UniProtKB-KW"/>
</dbReference>
<dbReference type="GO" id="GO:0015288">
    <property type="term" value="F:porin activity"/>
    <property type="evidence" value="ECO:0007669"/>
    <property type="project" value="UniProtKB-KW"/>
</dbReference>
<dbReference type="GO" id="GO:0034220">
    <property type="term" value="P:monoatomic ion transmembrane transport"/>
    <property type="evidence" value="ECO:0007669"/>
    <property type="project" value="InterPro"/>
</dbReference>
<dbReference type="CDD" id="cd00342">
    <property type="entry name" value="gram_neg_porins"/>
    <property type="match status" value="1"/>
</dbReference>
<dbReference type="Gene3D" id="2.40.160.10">
    <property type="entry name" value="Porin"/>
    <property type="match status" value="1"/>
</dbReference>
<dbReference type="InterPro" id="IPR050298">
    <property type="entry name" value="Gram-neg_bact_OMP"/>
</dbReference>
<dbReference type="InterPro" id="IPR033900">
    <property type="entry name" value="Gram_neg_porin_domain"/>
</dbReference>
<dbReference type="InterPro" id="IPR023614">
    <property type="entry name" value="Porin_dom_sf"/>
</dbReference>
<dbReference type="InterPro" id="IPR001897">
    <property type="entry name" value="Porin_gammaproteobac"/>
</dbReference>
<dbReference type="InterPro" id="IPR001702">
    <property type="entry name" value="Porin_Gram-ve"/>
</dbReference>
<dbReference type="PANTHER" id="PTHR34501:SF8">
    <property type="entry name" value="OUTER MEMBRANE PORIN N-RELATED"/>
    <property type="match status" value="1"/>
</dbReference>
<dbReference type="PANTHER" id="PTHR34501">
    <property type="entry name" value="PROTEIN YDDL-RELATED"/>
    <property type="match status" value="1"/>
</dbReference>
<dbReference type="Pfam" id="PF00267">
    <property type="entry name" value="Porin_1"/>
    <property type="match status" value="1"/>
</dbReference>
<dbReference type="PRINTS" id="PR00183">
    <property type="entry name" value="ECOLIPORIN"/>
</dbReference>
<dbReference type="PRINTS" id="PR00182">
    <property type="entry name" value="ECOLNEIPORIN"/>
</dbReference>
<dbReference type="SUPFAM" id="SSF56935">
    <property type="entry name" value="Porins"/>
    <property type="match status" value="1"/>
</dbReference>
<proteinExistence type="evidence at transcript level"/>
<keyword id="KW-0998">Cell outer membrane</keyword>
<keyword id="KW-0406">Ion transport</keyword>
<keyword id="KW-0472">Membrane</keyword>
<keyword id="KW-0626">Porin</keyword>
<keyword id="KW-0732">Signal</keyword>
<keyword id="KW-0812">Transmembrane</keyword>
<keyword id="KW-1134">Transmembrane beta strand</keyword>
<keyword id="KW-0813">Transport</keyword>
<evidence type="ECO:0000250" key="1">
    <source>
        <dbReference type="UniProtKB" id="P06996"/>
    </source>
</evidence>
<evidence type="ECO:0000255" key="2"/>
<evidence type="ECO:0000269" key="3">
    <source>
    </source>
</evidence>
<evidence type="ECO:0000303" key="4">
    <source>
    </source>
</evidence>
<evidence type="ECO:0000305" key="5"/>
<evidence type="ECO:0000305" key="6">
    <source>
    </source>
</evidence>
<comment type="function">
    <text evidence="1 3">Forms pores that allow passive diffusion of small molecules across the outer membrane (By similarity). Plays a role in resistance to carbapenems; this carbapenem-resistant, noncarbapenemase-producing clinical isolate has a deletion in ompF and a mutated marR gene that does not induce expression of this protein. However if this gene is overexpressed, or if wild-type marR is introduced, this leads to decreased resistance to the carbapenem antibiotics ertapenem, imipenem and meropenem (PubMed:23318808).</text>
</comment>
<comment type="subcellular location">
    <subcellularLocation>
        <location evidence="6">Cell outer membrane</location>
        <topology>Multi-pass membrane protein</topology>
    </subcellularLocation>
</comment>
<comment type="induction">
    <text evidence="3">Expression induced by marR.</text>
</comment>
<comment type="similarity">
    <text evidence="5">Belongs to the Gram-negative porin family.</text>
</comment>
<sequence>MKRKVLAMLVPALLVAGAANAAEIYNKDGNKVDFYGKMVGERIWSNTDDNNSENEDTSYARFGVKGESQITSELTGFGQFEYNLDASKPEGSNQEKTRLTFAGLKYNELGSFDYGRNYGVAYDAAAYTDMLVEWGGDSWASADNFMNGRTNGVATYRNSDFFGLVDGLNFAVQYQGKNSNRGVTKQNGDGYALSVDYNIEGFGFVGAYSKSDRTNEQAGDGYGDNAEVWSLAAKYDANNIYAAMMYGETRNMTVLANDHFANKTQNFEAVVQYQFDFGLRPSLGYVYSKGKDLYARDGHKGVDADRVNYIEVGTWYYFNKNMNVYTAYKFNLLDKDDAAITDAATDDQFAVGIVYQF</sequence>
<gene>
    <name evidence="4" type="primary">yedS</name>
</gene>
<accession>J9RX10</accession>
<name>YEDS_ECOLX</name>
<organism>
    <name type="scientific">Escherichia coli</name>
    <dbReference type="NCBI Taxonomy" id="562"/>
    <lineage>
        <taxon>Bacteria</taxon>
        <taxon>Pseudomonadati</taxon>
        <taxon>Pseudomonadota</taxon>
        <taxon>Gammaproteobacteria</taxon>
        <taxon>Enterobacterales</taxon>
        <taxon>Enterobacteriaceae</taxon>
        <taxon>Escherichia</taxon>
    </lineage>
</organism>